<name>PORC_METTH</name>
<comment type="catalytic activity">
    <reaction>
        <text>2 oxidized [2Fe-2S]-[ferredoxin] + pyruvate + CoA = 2 reduced [2Fe-2S]-[ferredoxin] + acetyl-CoA + CO2 + H(+)</text>
        <dbReference type="Rhea" id="RHEA:12765"/>
        <dbReference type="Rhea" id="RHEA-COMP:10000"/>
        <dbReference type="Rhea" id="RHEA-COMP:10001"/>
        <dbReference type="ChEBI" id="CHEBI:15361"/>
        <dbReference type="ChEBI" id="CHEBI:15378"/>
        <dbReference type="ChEBI" id="CHEBI:16526"/>
        <dbReference type="ChEBI" id="CHEBI:33737"/>
        <dbReference type="ChEBI" id="CHEBI:33738"/>
        <dbReference type="ChEBI" id="CHEBI:57287"/>
        <dbReference type="ChEBI" id="CHEBI:57288"/>
        <dbReference type="EC" id="1.2.7.1"/>
    </reaction>
</comment>
<comment type="subunit">
    <text>Heterotetramer of one alpha, one beta, one delta and one gamma chain.</text>
</comment>
<comment type="caution">
    <text evidence="1">There seems to be a sequencing error that fuses together porC and porD. We have cut the ORF into its two constituents.</text>
</comment>
<feature type="chain" id="PRO_0000099911" description="Pyruvate synthase subunit PorC">
    <location>
        <begin position="1"/>
        <end position="180"/>
    </location>
</feature>
<protein>
    <recommendedName>
        <fullName>Pyruvate synthase subunit PorC</fullName>
        <ecNumber>1.2.7.1</ecNumber>
    </recommendedName>
    <alternativeName>
        <fullName>Pyruvate oxidoreductase gamma chain</fullName>
        <shortName>POR</shortName>
    </alternativeName>
    <alternativeName>
        <fullName>Pyruvic-ferredoxin oxidoreductase subunit gamma</fullName>
    </alternativeName>
</protein>
<proteinExistence type="predicted"/>
<reference key="1">
    <citation type="journal article" date="1997" name="J. Bacteriol.">
        <title>Complete genome sequence of Methanobacterium thermoautotrophicum deltaH: functional analysis and comparative genomics.</title>
        <authorList>
            <person name="Smith D.R."/>
            <person name="Doucette-Stamm L.A."/>
            <person name="Deloughery C."/>
            <person name="Lee H.-M."/>
            <person name="Dubois J."/>
            <person name="Aldredge T."/>
            <person name="Bashirzadeh R."/>
            <person name="Blakely D."/>
            <person name="Cook R."/>
            <person name="Gilbert K."/>
            <person name="Harrison D."/>
            <person name="Hoang L."/>
            <person name="Keagle P."/>
            <person name="Lumm W."/>
            <person name="Pothier B."/>
            <person name="Qiu D."/>
            <person name="Spadafora R."/>
            <person name="Vicare R."/>
            <person name="Wang Y."/>
            <person name="Wierzbowski J."/>
            <person name="Gibson R."/>
            <person name="Jiwani N."/>
            <person name="Caruso A."/>
            <person name="Bush D."/>
            <person name="Safer H."/>
            <person name="Patwell D."/>
            <person name="Prabhakar S."/>
            <person name="McDougall S."/>
            <person name="Shimer G."/>
            <person name="Goyal A."/>
            <person name="Pietrovski S."/>
            <person name="Church G.M."/>
            <person name="Daniels C.J."/>
            <person name="Mao J.-I."/>
            <person name="Rice P."/>
            <person name="Noelling J."/>
            <person name="Reeve J.N."/>
        </authorList>
    </citation>
    <scope>NUCLEOTIDE SEQUENCE [LARGE SCALE GENOMIC DNA]</scope>
    <source>
        <strain>ATCC 29096 / DSM 1053 / JCM 10044 / NBRC 100330 / Delta H</strain>
    </source>
</reference>
<dbReference type="EC" id="1.2.7.1"/>
<dbReference type="EMBL" id="AE000666">
    <property type="protein sequence ID" value="AAB86210.1"/>
    <property type="status" value="ALT_TERM"/>
    <property type="molecule type" value="Genomic_DNA"/>
</dbReference>
<dbReference type="SMR" id="O27772"/>
<dbReference type="FunCoup" id="O27772">
    <property type="interactions" value="69"/>
</dbReference>
<dbReference type="STRING" id="187420.MTH_1740"/>
<dbReference type="PaxDb" id="187420-MTH_1740"/>
<dbReference type="EnsemblBacteria" id="AAB86210">
    <property type="protein sequence ID" value="AAB86210"/>
    <property type="gene ID" value="MTH_1740"/>
</dbReference>
<dbReference type="KEGG" id="mth:MTH_1740"/>
<dbReference type="HOGENOM" id="CLU_060916_0_0_2"/>
<dbReference type="InParanoid" id="O27772"/>
<dbReference type="BioCyc" id="MetaCyc:MONOMER-14531"/>
<dbReference type="Proteomes" id="UP000005223">
    <property type="component" value="Chromosome"/>
</dbReference>
<dbReference type="GO" id="GO:0019164">
    <property type="term" value="F:pyruvate synthase activity"/>
    <property type="evidence" value="ECO:0007669"/>
    <property type="project" value="UniProtKB-EC"/>
</dbReference>
<dbReference type="Gene3D" id="3.40.920.10">
    <property type="entry name" value="Pyruvate-ferredoxin oxidoreductase, PFOR, domain III"/>
    <property type="match status" value="1"/>
</dbReference>
<dbReference type="InterPro" id="IPR051626">
    <property type="entry name" value="Oxidoreductase_gamma_subunit"/>
</dbReference>
<dbReference type="InterPro" id="IPR011894">
    <property type="entry name" value="PorC_KorC"/>
</dbReference>
<dbReference type="InterPro" id="IPR053412">
    <property type="entry name" value="Pyruvate_synthase_PorC"/>
</dbReference>
<dbReference type="InterPro" id="IPR019752">
    <property type="entry name" value="Pyrv/ketoisovalerate_OxRed_cat"/>
</dbReference>
<dbReference type="InterPro" id="IPR002869">
    <property type="entry name" value="Pyrv_flavodox_OxRed_cen"/>
</dbReference>
<dbReference type="NCBIfam" id="TIGR02175">
    <property type="entry name" value="PorC_KorC"/>
    <property type="match status" value="1"/>
</dbReference>
<dbReference type="NCBIfam" id="NF040683">
    <property type="entry name" value="PorC_Meth_Thtga"/>
    <property type="match status" value="1"/>
</dbReference>
<dbReference type="NCBIfam" id="NF006321">
    <property type="entry name" value="PRK08534.1"/>
    <property type="match status" value="1"/>
</dbReference>
<dbReference type="PANTHER" id="PTHR43366">
    <property type="entry name" value="PYRUVATE SYNTHASE SUBUNIT PORC"/>
    <property type="match status" value="1"/>
</dbReference>
<dbReference type="PANTHER" id="PTHR43366:SF1">
    <property type="entry name" value="PYRUVATE SYNTHASE SUBUNIT PORC"/>
    <property type="match status" value="1"/>
</dbReference>
<dbReference type="Pfam" id="PF01558">
    <property type="entry name" value="POR"/>
    <property type="match status" value="1"/>
</dbReference>
<dbReference type="SUPFAM" id="SSF53323">
    <property type="entry name" value="Pyruvate-ferredoxin oxidoreductase, PFOR, domain III"/>
    <property type="match status" value="1"/>
</dbReference>
<evidence type="ECO:0000305" key="1"/>
<sequence length="180" mass="19524">MIEIRFHGRGGQGAVTAAEILAKAAFEDGKYSQAFPFFGVERRGAPVMAFTRIDDSPVRRRYQVYNPDYVVVLDEGLVDVVDVFSGLKDDGVVVLNKSGDFQGGDVKVHTIDATGIALETLGRPIVNTVMLGAFAGVTGLVSIDSLIKIIKETFPGKIGEKNAEAARMAYEEIEKLRVNM</sequence>
<organism>
    <name type="scientific">Methanothermobacter thermautotrophicus (strain ATCC 29096 / DSM 1053 / JCM 10044 / NBRC 100330 / Delta H)</name>
    <name type="common">Methanobacterium thermoautotrophicum</name>
    <dbReference type="NCBI Taxonomy" id="187420"/>
    <lineage>
        <taxon>Archaea</taxon>
        <taxon>Methanobacteriati</taxon>
        <taxon>Methanobacteriota</taxon>
        <taxon>Methanomada group</taxon>
        <taxon>Methanobacteria</taxon>
        <taxon>Methanobacteriales</taxon>
        <taxon>Methanobacteriaceae</taxon>
        <taxon>Methanothermobacter</taxon>
    </lineage>
</organism>
<gene>
    <name type="primary">porC</name>
    <name type="ordered locus">MTH_1740</name>
</gene>
<accession>O27772</accession>
<keyword id="KW-0560">Oxidoreductase</keyword>
<keyword id="KW-1185">Reference proteome</keyword>